<protein>
    <recommendedName>
        <fullName>Basic phospholipase A2 PA-10A</fullName>
        <shortName>svPLA2</shortName>
        <ecNumber>3.1.1.4</ecNumber>
    </recommendedName>
    <alternativeName>
        <fullName>Phosphatidylcholine 2-acylhydrolase</fullName>
    </alternativeName>
</protein>
<sequence length="118" mass="13027">NLIQFSNMIQCANKGSRPSLHYADYGCYCGWGGSGTPVDELDRCCKVHDDCYDQAGKKGCFPKLTLYSWDCTGNVPICNPKSKCKDFVCACDAAAAKCFAKAPYNKANWNIDTKTRCK</sequence>
<feature type="chain" id="PRO_0000161685" description="Basic phospholipase A2 PA-10A">
    <location>
        <begin position="1"/>
        <end position="118"/>
    </location>
</feature>
<feature type="active site" evidence="1">
    <location>
        <position position="48"/>
    </location>
</feature>
<feature type="active site" evidence="1">
    <location>
        <position position="92"/>
    </location>
</feature>
<feature type="binding site" evidence="1">
    <location>
        <position position="28"/>
    </location>
    <ligand>
        <name>Ca(2+)</name>
        <dbReference type="ChEBI" id="CHEBI:29108"/>
    </ligand>
</feature>
<feature type="binding site" evidence="1">
    <location>
        <position position="30"/>
    </location>
    <ligand>
        <name>Ca(2+)</name>
        <dbReference type="ChEBI" id="CHEBI:29108"/>
    </ligand>
</feature>
<feature type="binding site" evidence="1">
    <location>
        <position position="32"/>
    </location>
    <ligand>
        <name>Ca(2+)</name>
        <dbReference type="ChEBI" id="CHEBI:29108"/>
    </ligand>
</feature>
<feature type="binding site" evidence="1">
    <location>
        <position position="49"/>
    </location>
    <ligand>
        <name>Ca(2+)</name>
        <dbReference type="ChEBI" id="CHEBI:29108"/>
    </ligand>
</feature>
<feature type="disulfide bond" evidence="1">
    <location>
        <begin position="11"/>
        <end position="71"/>
    </location>
</feature>
<feature type="disulfide bond" evidence="1">
    <location>
        <begin position="27"/>
        <end position="117"/>
    </location>
</feature>
<feature type="disulfide bond" evidence="1">
    <location>
        <begin position="29"/>
        <end position="45"/>
    </location>
</feature>
<feature type="disulfide bond" evidence="1">
    <location>
        <begin position="44"/>
        <end position="98"/>
    </location>
</feature>
<feature type="disulfide bond" evidence="1">
    <location>
        <begin position="51"/>
        <end position="91"/>
    </location>
</feature>
<feature type="disulfide bond" evidence="1">
    <location>
        <begin position="60"/>
        <end position="84"/>
    </location>
</feature>
<feature type="disulfide bond" evidence="1">
    <location>
        <begin position="78"/>
        <end position="89"/>
    </location>
</feature>
<comment type="function">
    <text>PLA2 catalyzes the calcium-dependent hydrolysis of the 2-acyl groups in 3-sn-phosphoglycerides.</text>
</comment>
<comment type="catalytic activity">
    <reaction evidence="2 3">
        <text>a 1,2-diacyl-sn-glycero-3-phosphocholine + H2O = a 1-acyl-sn-glycero-3-phosphocholine + a fatty acid + H(+)</text>
        <dbReference type="Rhea" id="RHEA:15801"/>
        <dbReference type="ChEBI" id="CHEBI:15377"/>
        <dbReference type="ChEBI" id="CHEBI:15378"/>
        <dbReference type="ChEBI" id="CHEBI:28868"/>
        <dbReference type="ChEBI" id="CHEBI:57643"/>
        <dbReference type="ChEBI" id="CHEBI:58168"/>
        <dbReference type="EC" id="3.1.1.4"/>
    </reaction>
</comment>
<comment type="cofactor">
    <cofactor evidence="1">
        <name>Ca(2+)</name>
        <dbReference type="ChEBI" id="CHEBI:29108"/>
    </cofactor>
    <text evidence="1">Binds 1 Ca(2+) ion.</text>
</comment>
<comment type="subcellular location">
    <subcellularLocation>
        <location>Secreted</location>
    </subcellularLocation>
</comment>
<comment type="tissue specificity">
    <text>Expressed by the venom gland.</text>
</comment>
<comment type="similarity">
    <text evidence="4">Belongs to the phospholipase A2 family. Group I subfamily. D49 sub-subfamily.</text>
</comment>
<name>PA2BA_PSEAU</name>
<keyword id="KW-0106">Calcium</keyword>
<keyword id="KW-0903">Direct protein sequencing</keyword>
<keyword id="KW-1015">Disulfide bond</keyword>
<keyword id="KW-0378">Hydrolase</keyword>
<keyword id="KW-0442">Lipid degradation</keyword>
<keyword id="KW-0443">Lipid metabolism</keyword>
<keyword id="KW-0479">Metal-binding</keyword>
<keyword id="KW-0964">Secreted</keyword>
<reference key="1">
    <citation type="journal article" date="1990" name="Toxicon">
        <title>Amino acid sequences of eight phospholipases A2 from the venom of Australian king brown snake, Pseudechis australis.</title>
        <authorList>
            <person name="Takasaki C."/>
            <person name="Yutani F."/>
            <person name="Kajiyashiki T."/>
        </authorList>
    </citation>
    <scope>PROTEIN SEQUENCE</scope>
    <source>
        <tissue>Venom</tissue>
    </source>
</reference>
<dbReference type="EC" id="3.1.1.4"/>
<dbReference type="PIR" id="E34860">
    <property type="entry name" value="E34860"/>
</dbReference>
<dbReference type="SMR" id="P20254"/>
<dbReference type="GO" id="GO:0005576">
    <property type="term" value="C:extracellular region"/>
    <property type="evidence" value="ECO:0007669"/>
    <property type="project" value="UniProtKB-SubCell"/>
</dbReference>
<dbReference type="GO" id="GO:0005509">
    <property type="term" value="F:calcium ion binding"/>
    <property type="evidence" value="ECO:0007669"/>
    <property type="project" value="InterPro"/>
</dbReference>
<dbReference type="GO" id="GO:0047498">
    <property type="term" value="F:calcium-dependent phospholipase A2 activity"/>
    <property type="evidence" value="ECO:0007669"/>
    <property type="project" value="TreeGrafter"/>
</dbReference>
<dbReference type="GO" id="GO:0005543">
    <property type="term" value="F:phospholipid binding"/>
    <property type="evidence" value="ECO:0007669"/>
    <property type="project" value="TreeGrafter"/>
</dbReference>
<dbReference type="GO" id="GO:0050482">
    <property type="term" value="P:arachidonate secretion"/>
    <property type="evidence" value="ECO:0007669"/>
    <property type="project" value="InterPro"/>
</dbReference>
<dbReference type="GO" id="GO:0016042">
    <property type="term" value="P:lipid catabolic process"/>
    <property type="evidence" value="ECO:0007669"/>
    <property type="project" value="UniProtKB-KW"/>
</dbReference>
<dbReference type="GO" id="GO:0006644">
    <property type="term" value="P:phospholipid metabolic process"/>
    <property type="evidence" value="ECO:0007669"/>
    <property type="project" value="InterPro"/>
</dbReference>
<dbReference type="CDD" id="cd00125">
    <property type="entry name" value="PLA2c"/>
    <property type="match status" value="1"/>
</dbReference>
<dbReference type="FunFam" id="1.20.90.10:FF:000007">
    <property type="entry name" value="Acidic phospholipase A2"/>
    <property type="match status" value="1"/>
</dbReference>
<dbReference type="Gene3D" id="1.20.90.10">
    <property type="entry name" value="Phospholipase A2 domain"/>
    <property type="match status" value="1"/>
</dbReference>
<dbReference type="InterPro" id="IPR001211">
    <property type="entry name" value="PLipase_A2"/>
</dbReference>
<dbReference type="InterPro" id="IPR033112">
    <property type="entry name" value="PLipase_A2_Asp_AS"/>
</dbReference>
<dbReference type="InterPro" id="IPR016090">
    <property type="entry name" value="PLipase_A2_dom"/>
</dbReference>
<dbReference type="InterPro" id="IPR036444">
    <property type="entry name" value="PLipase_A2_dom_sf"/>
</dbReference>
<dbReference type="InterPro" id="IPR033113">
    <property type="entry name" value="PLipase_A2_His_AS"/>
</dbReference>
<dbReference type="PANTHER" id="PTHR11716:SF51">
    <property type="entry name" value="PHOSPHOLIPASE A2"/>
    <property type="match status" value="1"/>
</dbReference>
<dbReference type="PANTHER" id="PTHR11716">
    <property type="entry name" value="PHOSPHOLIPASE A2 FAMILY MEMBER"/>
    <property type="match status" value="1"/>
</dbReference>
<dbReference type="Pfam" id="PF00068">
    <property type="entry name" value="Phospholip_A2_1"/>
    <property type="match status" value="1"/>
</dbReference>
<dbReference type="PRINTS" id="PR00389">
    <property type="entry name" value="PHPHLIPASEA2"/>
</dbReference>
<dbReference type="SMART" id="SM00085">
    <property type="entry name" value="PA2c"/>
    <property type="match status" value="1"/>
</dbReference>
<dbReference type="SUPFAM" id="SSF48619">
    <property type="entry name" value="Phospholipase A2, PLA2"/>
    <property type="match status" value="1"/>
</dbReference>
<dbReference type="PROSITE" id="PS00119">
    <property type="entry name" value="PA2_ASP"/>
    <property type="match status" value="1"/>
</dbReference>
<dbReference type="PROSITE" id="PS00118">
    <property type="entry name" value="PA2_HIS"/>
    <property type="match status" value="1"/>
</dbReference>
<proteinExistence type="evidence at protein level"/>
<evidence type="ECO:0000250" key="1"/>
<evidence type="ECO:0000255" key="2">
    <source>
        <dbReference type="PROSITE-ProRule" id="PRU10035"/>
    </source>
</evidence>
<evidence type="ECO:0000255" key="3">
    <source>
        <dbReference type="PROSITE-ProRule" id="PRU10036"/>
    </source>
</evidence>
<evidence type="ECO:0000305" key="4"/>
<accession>P20254</accession>
<organism>
    <name type="scientific">Pseudechis australis</name>
    <name type="common">Mulga snake</name>
    <name type="synonym">King brown snake</name>
    <dbReference type="NCBI Taxonomy" id="8670"/>
    <lineage>
        <taxon>Eukaryota</taxon>
        <taxon>Metazoa</taxon>
        <taxon>Chordata</taxon>
        <taxon>Craniata</taxon>
        <taxon>Vertebrata</taxon>
        <taxon>Euteleostomi</taxon>
        <taxon>Lepidosauria</taxon>
        <taxon>Squamata</taxon>
        <taxon>Bifurcata</taxon>
        <taxon>Unidentata</taxon>
        <taxon>Episquamata</taxon>
        <taxon>Toxicofera</taxon>
        <taxon>Serpentes</taxon>
        <taxon>Colubroidea</taxon>
        <taxon>Elapidae</taxon>
        <taxon>Hydrophiinae</taxon>
        <taxon>Pseudechis</taxon>
    </lineage>
</organism>